<organism>
    <name type="scientific">Shewanella baltica (strain OS185)</name>
    <dbReference type="NCBI Taxonomy" id="402882"/>
    <lineage>
        <taxon>Bacteria</taxon>
        <taxon>Pseudomonadati</taxon>
        <taxon>Pseudomonadota</taxon>
        <taxon>Gammaproteobacteria</taxon>
        <taxon>Alteromonadales</taxon>
        <taxon>Shewanellaceae</taxon>
        <taxon>Shewanella</taxon>
    </lineage>
</organism>
<keyword id="KW-0028">Amino-acid biosynthesis</keyword>
<keyword id="KW-0057">Aromatic amino acid biosynthesis</keyword>
<keyword id="KW-0456">Lyase</keyword>
<keyword id="KW-0663">Pyridoxal phosphate</keyword>
<keyword id="KW-0822">Tryptophan biosynthesis</keyword>
<proteinExistence type="inferred from homology"/>
<feature type="chain" id="PRO_1000018387" description="Tryptophan synthase beta chain">
    <location>
        <begin position="1"/>
        <end position="396"/>
    </location>
</feature>
<feature type="modified residue" description="N6-(pyridoxal phosphate)lysine" evidence="1">
    <location>
        <position position="88"/>
    </location>
</feature>
<comment type="function">
    <text evidence="1">The beta subunit is responsible for the synthesis of L-tryptophan from indole and L-serine.</text>
</comment>
<comment type="catalytic activity">
    <reaction evidence="1">
        <text>(1S,2R)-1-C-(indol-3-yl)glycerol 3-phosphate + L-serine = D-glyceraldehyde 3-phosphate + L-tryptophan + H2O</text>
        <dbReference type="Rhea" id="RHEA:10532"/>
        <dbReference type="ChEBI" id="CHEBI:15377"/>
        <dbReference type="ChEBI" id="CHEBI:33384"/>
        <dbReference type="ChEBI" id="CHEBI:57912"/>
        <dbReference type="ChEBI" id="CHEBI:58866"/>
        <dbReference type="ChEBI" id="CHEBI:59776"/>
        <dbReference type="EC" id="4.2.1.20"/>
    </reaction>
</comment>
<comment type="cofactor">
    <cofactor evidence="1">
        <name>pyridoxal 5'-phosphate</name>
        <dbReference type="ChEBI" id="CHEBI:597326"/>
    </cofactor>
</comment>
<comment type="pathway">
    <text evidence="1">Amino-acid biosynthesis; L-tryptophan biosynthesis; L-tryptophan from chorismate: step 5/5.</text>
</comment>
<comment type="subunit">
    <text evidence="1">Tetramer of two alpha and two beta chains.</text>
</comment>
<comment type="similarity">
    <text evidence="1">Belongs to the TrpB family.</text>
</comment>
<evidence type="ECO:0000255" key="1">
    <source>
        <dbReference type="HAMAP-Rule" id="MF_00133"/>
    </source>
</evidence>
<gene>
    <name evidence="1" type="primary">trpB</name>
    <name type="ordered locus">Shew185_2726</name>
</gene>
<protein>
    <recommendedName>
        <fullName evidence="1">Tryptophan synthase beta chain</fullName>
        <ecNumber evidence="1">4.2.1.20</ecNumber>
    </recommendedName>
</protein>
<name>TRPB_SHEB8</name>
<reference key="1">
    <citation type="submission" date="2007-07" db="EMBL/GenBank/DDBJ databases">
        <title>Complete sequence of chromosome of Shewanella baltica OS185.</title>
        <authorList>
            <consortium name="US DOE Joint Genome Institute"/>
            <person name="Copeland A."/>
            <person name="Lucas S."/>
            <person name="Lapidus A."/>
            <person name="Barry K."/>
            <person name="Glavina del Rio T."/>
            <person name="Dalin E."/>
            <person name="Tice H."/>
            <person name="Pitluck S."/>
            <person name="Sims D."/>
            <person name="Brettin T."/>
            <person name="Bruce D."/>
            <person name="Detter J.C."/>
            <person name="Han C."/>
            <person name="Schmutz J."/>
            <person name="Larimer F."/>
            <person name="Land M."/>
            <person name="Hauser L."/>
            <person name="Kyrpides N."/>
            <person name="Mikhailova N."/>
            <person name="Brettar I."/>
            <person name="Rodrigues J."/>
            <person name="Konstantinidis K."/>
            <person name="Tiedje J."/>
            <person name="Richardson P."/>
        </authorList>
    </citation>
    <scope>NUCLEOTIDE SEQUENCE [LARGE SCALE GENOMIC DNA]</scope>
    <source>
        <strain>OS185</strain>
    </source>
</reference>
<accession>A6WPX1</accession>
<dbReference type="EC" id="4.2.1.20" evidence="1"/>
<dbReference type="EMBL" id="CP000753">
    <property type="protein sequence ID" value="ABS08860.1"/>
    <property type="molecule type" value="Genomic_DNA"/>
</dbReference>
<dbReference type="RefSeq" id="WP_012089560.1">
    <property type="nucleotide sequence ID" value="NC_009665.1"/>
</dbReference>
<dbReference type="SMR" id="A6WPX1"/>
<dbReference type="KEGG" id="sbm:Shew185_2726"/>
<dbReference type="HOGENOM" id="CLU_016734_3_1_6"/>
<dbReference type="UniPathway" id="UPA00035">
    <property type="reaction ID" value="UER00044"/>
</dbReference>
<dbReference type="GO" id="GO:0005737">
    <property type="term" value="C:cytoplasm"/>
    <property type="evidence" value="ECO:0007669"/>
    <property type="project" value="TreeGrafter"/>
</dbReference>
<dbReference type="GO" id="GO:0004834">
    <property type="term" value="F:tryptophan synthase activity"/>
    <property type="evidence" value="ECO:0007669"/>
    <property type="project" value="UniProtKB-UniRule"/>
</dbReference>
<dbReference type="CDD" id="cd06446">
    <property type="entry name" value="Trp-synth_B"/>
    <property type="match status" value="1"/>
</dbReference>
<dbReference type="FunFam" id="3.40.50.1100:FF:000001">
    <property type="entry name" value="Tryptophan synthase beta chain"/>
    <property type="match status" value="1"/>
</dbReference>
<dbReference type="FunFam" id="3.40.50.1100:FF:000004">
    <property type="entry name" value="Tryptophan synthase beta chain"/>
    <property type="match status" value="1"/>
</dbReference>
<dbReference type="Gene3D" id="3.40.50.1100">
    <property type="match status" value="2"/>
</dbReference>
<dbReference type="HAMAP" id="MF_00133">
    <property type="entry name" value="Trp_synth_beta"/>
    <property type="match status" value="1"/>
</dbReference>
<dbReference type="InterPro" id="IPR006653">
    <property type="entry name" value="Trp_synth_b_CS"/>
</dbReference>
<dbReference type="InterPro" id="IPR006654">
    <property type="entry name" value="Trp_synth_beta"/>
</dbReference>
<dbReference type="InterPro" id="IPR023026">
    <property type="entry name" value="Trp_synth_beta/beta-like"/>
</dbReference>
<dbReference type="InterPro" id="IPR001926">
    <property type="entry name" value="TrpB-like_PALP"/>
</dbReference>
<dbReference type="InterPro" id="IPR036052">
    <property type="entry name" value="TrpB-like_PALP_sf"/>
</dbReference>
<dbReference type="NCBIfam" id="TIGR00263">
    <property type="entry name" value="trpB"/>
    <property type="match status" value="1"/>
</dbReference>
<dbReference type="PANTHER" id="PTHR48077:SF3">
    <property type="entry name" value="TRYPTOPHAN SYNTHASE"/>
    <property type="match status" value="1"/>
</dbReference>
<dbReference type="PANTHER" id="PTHR48077">
    <property type="entry name" value="TRYPTOPHAN SYNTHASE-RELATED"/>
    <property type="match status" value="1"/>
</dbReference>
<dbReference type="Pfam" id="PF00291">
    <property type="entry name" value="PALP"/>
    <property type="match status" value="1"/>
</dbReference>
<dbReference type="PIRSF" id="PIRSF001413">
    <property type="entry name" value="Trp_syn_beta"/>
    <property type="match status" value="1"/>
</dbReference>
<dbReference type="SUPFAM" id="SSF53686">
    <property type="entry name" value="Tryptophan synthase beta subunit-like PLP-dependent enzymes"/>
    <property type="match status" value="1"/>
</dbReference>
<dbReference type="PROSITE" id="PS00168">
    <property type="entry name" value="TRP_SYNTHASE_BETA"/>
    <property type="match status" value="1"/>
</dbReference>
<sequence length="396" mass="42796">MSKLKLNPYFGEYGGMYVPQILVPALKQLETAFVEAQEDDDFKAEFTDLLKNYAGRPTALTLTRNLSPNPMVKIYLKREDLLHGGAHKTNQVLGQALLAKRMGKKEIIAETGAGQHGVATALACALLGLKCKVYMGAKDVARQSPNVFRMRLMGAEVIPVTSGSATLKDACNEAMRDWSGSYEKAHYLLGTAAGPHPFPTIVREFQRIIGEETKKQMLEREGRLPDAVIACVGGGSNAIGMFADFIDEPSVELIGVEPAGKGIDTPMHGAPLKHGKTGIFFGMKAPLMQDSEGQIEESYSISAGLDFPSVGPQHAHLNATGRARYESATDDEALEAFQQLARCEGIIPALESAHAIAYAVKMARECTKETILVVNLSGRGDKDIFTVSDILNGKEV</sequence>